<protein>
    <recommendedName>
        <fullName evidence="1">Elongation factor P</fullName>
        <shortName evidence="1">EF-P</shortName>
    </recommendedName>
</protein>
<sequence length="185" mass="20497">MISVTELRNGTKVEMDGGLWECLEYSHLKMGRGGAKVVTKFRNMETGSIVDRTFNSGEKLQDIYVEGKKMQYLYRDGDDYVFMDMETFDQVHLPPALVGDTAKFMKENTEVEVAMYGDKALSITLPNQVILKIVQTDPGVRGDTVSGGTKPATLETGAVVQVPLFVEQGTDVKVDTRTGQYLSRA</sequence>
<comment type="function">
    <text evidence="1">Involved in peptide bond synthesis. Stimulates efficient translation and peptide-bond synthesis on native or reconstituted 70S ribosomes in vitro. Probably functions indirectly by altering the affinity of the ribosome for aminoacyl-tRNA, thus increasing their reactivity as acceptors for peptidyl transferase.</text>
</comment>
<comment type="pathway">
    <text evidence="1">Protein biosynthesis; polypeptide chain elongation.</text>
</comment>
<comment type="subcellular location">
    <subcellularLocation>
        <location evidence="1">Cytoplasm</location>
    </subcellularLocation>
</comment>
<comment type="similarity">
    <text evidence="1">Belongs to the elongation factor P family.</text>
</comment>
<keyword id="KW-0963">Cytoplasm</keyword>
<keyword id="KW-0251">Elongation factor</keyword>
<keyword id="KW-0648">Protein biosynthesis</keyword>
<name>EFP_DEIGD</name>
<evidence type="ECO:0000255" key="1">
    <source>
        <dbReference type="HAMAP-Rule" id="MF_00141"/>
    </source>
</evidence>
<reference key="1">
    <citation type="submission" date="2006-04" db="EMBL/GenBank/DDBJ databases">
        <title>Complete sequence of chromosome of Deinococcus geothermalis DSM 11300.</title>
        <authorList>
            <person name="Copeland A."/>
            <person name="Lucas S."/>
            <person name="Lapidus A."/>
            <person name="Barry K."/>
            <person name="Detter J.C."/>
            <person name="Glavina del Rio T."/>
            <person name="Hammon N."/>
            <person name="Israni S."/>
            <person name="Dalin E."/>
            <person name="Tice H."/>
            <person name="Pitluck S."/>
            <person name="Brettin T."/>
            <person name="Bruce D."/>
            <person name="Han C."/>
            <person name="Tapia R."/>
            <person name="Saunders E."/>
            <person name="Gilna P."/>
            <person name="Schmutz J."/>
            <person name="Larimer F."/>
            <person name="Land M."/>
            <person name="Hauser L."/>
            <person name="Kyrpides N."/>
            <person name="Kim E."/>
            <person name="Daly M.J."/>
            <person name="Fredrickson J.K."/>
            <person name="Makarova K.S."/>
            <person name="Gaidamakova E.K."/>
            <person name="Zhai M."/>
            <person name="Richardson P."/>
        </authorList>
    </citation>
    <scope>NUCLEOTIDE SEQUENCE [LARGE SCALE GENOMIC DNA]</scope>
    <source>
        <strain>DSM 11300 / CIP 105573 / AG-3a</strain>
    </source>
</reference>
<organism>
    <name type="scientific">Deinococcus geothermalis (strain DSM 11300 / CIP 105573 / AG-3a)</name>
    <dbReference type="NCBI Taxonomy" id="319795"/>
    <lineage>
        <taxon>Bacteria</taxon>
        <taxon>Thermotogati</taxon>
        <taxon>Deinococcota</taxon>
        <taxon>Deinococci</taxon>
        <taxon>Deinococcales</taxon>
        <taxon>Deinococcaceae</taxon>
        <taxon>Deinococcus</taxon>
    </lineage>
</organism>
<feature type="chain" id="PRO_1000010729" description="Elongation factor P">
    <location>
        <begin position="1"/>
        <end position="185"/>
    </location>
</feature>
<gene>
    <name evidence="1" type="primary">efp</name>
    <name type="ordered locus">Dgeo_0468</name>
</gene>
<accession>Q1J163</accession>
<proteinExistence type="inferred from homology"/>
<dbReference type="EMBL" id="CP000359">
    <property type="protein sequence ID" value="ABF44771.1"/>
    <property type="molecule type" value="Genomic_DNA"/>
</dbReference>
<dbReference type="RefSeq" id="WP_011529613.1">
    <property type="nucleotide sequence ID" value="NC_008025.1"/>
</dbReference>
<dbReference type="SMR" id="Q1J163"/>
<dbReference type="STRING" id="319795.Dgeo_0468"/>
<dbReference type="KEGG" id="dge:Dgeo_0468"/>
<dbReference type="eggNOG" id="COG0231">
    <property type="taxonomic scope" value="Bacteria"/>
</dbReference>
<dbReference type="HOGENOM" id="CLU_074944_0_1_0"/>
<dbReference type="UniPathway" id="UPA00345"/>
<dbReference type="Proteomes" id="UP000002431">
    <property type="component" value="Chromosome"/>
</dbReference>
<dbReference type="GO" id="GO:0005737">
    <property type="term" value="C:cytoplasm"/>
    <property type="evidence" value="ECO:0007669"/>
    <property type="project" value="UniProtKB-SubCell"/>
</dbReference>
<dbReference type="GO" id="GO:0003746">
    <property type="term" value="F:translation elongation factor activity"/>
    <property type="evidence" value="ECO:0007669"/>
    <property type="project" value="UniProtKB-UniRule"/>
</dbReference>
<dbReference type="GO" id="GO:0043043">
    <property type="term" value="P:peptide biosynthetic process"/>
    <property type="evidence" value="ECO:0007669"/>
    <property type="project" value="InterPro"/>
</dbReference>
<dbReference type="CDD" id="cd04470">
    <property type="entry name" value="S1_EF-P_repeat_1"/>
    <property type="match status" value="1"/>
</dbReference>
<dbReference type="CDD" id="cd05794">
    <property type="entry name" value="S1_EF-P_repeat_2"/>
    <property type="match status" value="1"/>
</dbReference>
<dbReference type="FunFam" id="2.30.30.30:FF:000003">
    <property type="entry name" value="Elongation factor P"/>
    <property type="match status" value="1"/>
</dbReference>
<dbReference type="FunFam" id="2.40.50.140:FF:000004">
    <property type="entry name" value="Elongation factor P"/>
    <property type="match status" value="1"/>
</dbReference>
<dbReference type="FunFam" id="2.40.50.140:FF:000009">
    <property type="entry name" value="Elongation factor P"/>
    <property type="match status" value="1"/>
</dbReference>
<dbReference type="Gene3D" id="2.30.30.30">
    <property type="match status" value="1"/>
</dbReference>
<dbReference type="Gene3D" id="2.40.50.140">
    <property type="entry name" value="Nucleic acid-binding proteins"/>
    <property type="match status" value="2"/>
</dbReference>
<dbReference type="HAMAP" id="MF_00141">
    <property type="entry name" value="EF_P"/>
    <property type="match status" value="1"/>
</dbReference>
<dbReference type="InterPro" id="IPR015365">
    <property type="entry name" value="Elong-fact-P_C"/>
</dbReference>
<dbReference type="InterPro" id="IPR012340">
    <property type="entry name" value="NA-bd_OB-fold"/>
</dbReference>
<dbReference type="InterPro" id="IPR014722">
    <property type="entry name" value="Rib_uL2_dom2"/>
</dbReference>
<dbReference type="InterPro" id="IPR020599">
    <property type="entry name" value="Transl_elong_fac_P/YeiP"/>
</dbReference>
<dbReference type="InterPro" id="IPR013185">
    <property type="entry name" value="Transl_elong_KOW-like"/>
</dbReference>
<dbReference type="InterPro" id="IPR001059">
    <property type="entry name" value="Transl_elong_P/YeiP_cen"/>
</dbReference>
<dbReference type="InterPro" id="IPR013852">
    <property type="entry name" value="Transl_elong_P/YeiP_CS"/>
</dbReference>
<dbReference type="InterPro" id="IPR011768">
    <property type="entry name" value="Transl_elongation_fac_P"/>
</dbReference>
<dbReference type="InterPro" id="IPR008991">
    <property type="entry name" value="Translation_prot_SH3-like_sf"/>
</dbReference>
<dbReference type="NCBIfam" id="TIGR00038">
    <property type="entry name" value="efp"/>
    <property type="match status" value="1"/>
</dbReference>
<dbReference type="NCBIfam" id="NF001810">
    <property type="entry name" value="PRK00529.1"/>
    <property type="match status" value="1"/>
</dbReference>
<dbReference type="PANTHER" id="PTHR30053">
    <property type="entry name" value="ELONGATION FACTOR P"/>
    <property type="match status" value="1"/>
</dbReference>
<dbReference type="PANTHER" id="PTHR30053:SF12">
    <property type="entry name" value="ELONGATION FACTOR P (EF-P) FAMILY PROTEIN"/>
    <property type="match status" value="1"/>
</dbReference>
<dbReference type="Pfam" id="PF01132">
    <property type="entry name" value="EFP"/>
    <property type="match status" value="1"/>
</dbReference>
<dbReference type="Pfam" id="PF08207">
    <property type="entry name" value="EFP_N"/>
    <property type="match status" value="1"/>
</dbReference>
<dbReference type="Pfam" id="PF09285">
    <property type="entry name" value="Elong-fact-P_C"/>
    <property type="match status" value="1"/>
</dbReference>
<dbReference type="PIRSF" id="PIRSF005901">
    <property type="entry name" value="EF-P"/>
    <property type="match status" value="1"/>
</dbReference>
<dbReference type="SMART" id="SM01185">
    <property type="entry name" value="EFP"/>
    <property type="match status" value="1"/>
</dbReference>
<dbReference type="SMART" id="SM00841">
    <property type="entry name" value="Elong-fact-P_C"/>
    <property type="match status" value="1"/>
</dbReference>
<dbReference type="SUPFAM" id="SSF50249">
    <property type="entry name" value="Nucleic acid-binding proteins"/>
    <property type="match status" value="2"/>
</dbReference>
<dbReference type="SUPFAM" id="SSF50104">
    <property type="entry name" value="Translation proteins SH3-like domain"/>
    <property type="match status" value="1"/>
</dbReference>
<dbReference type="PROSITE" id="PS01275">
    <property type="entry name" value="EFP"/>
    <property type="match status" value="1"/>
</dbReference>